<feature type="chain" id="PRO_0000161501" description="tRNA uridine(34) hydroxylase">
    <location>
        <begin position="1"/>
        <end position="309"/>
    </location>
</feature>
<feature type="domain" description="Rhodanese" evidence="1">
    <location>
        <begin position="129"/>
        <end position="223"/>
    </location>
</feature>
<feature type="region of interest" description="Disordered" evidence="2">
    <location>
        <begin position="288"/>
        <end position="309"/>
    </location>
</feature>
<feature type="active site" description="Cysteine persulfide intermediate" evidence="1">
    <location>
        <position position="183"/>
    </location>
</feature>
<name>TRHO_RHILO</name>
<gene>
    <name evidence="1" type="primary">trhO</name>
    <name type="ordered locus">mll2992</name>
</gene>
<sequence length="309" mass="33715">MTPSAPSQPVRVAALYRFARLDAFEALRAPLAAFCCGRGIKGTLLLAHEGINGTVAGSEEAIAELIDHIEAIDGLAGLEVKFSSATDMPFHRMKVRLKREIVTMGVEDIDPATSAGTYVAPADWNALISEPGTIVIDTRNTYEVSIGTFKGAVDPATASFREFPAWVEAHRAELEGRKVAMFCTGGIRCEKATAYVKSLGFEDVFHLKGGILKYLEEVPAEQSLWQGECFVFDERVSVSHGLAEGDAELCRACRHPLTASELTSPRYAAGVSCPHCFDARTDEDRQRYAERQRQVELAQARGKRPHIGS</sequence>
<keyword id="KW-0560">Oxidoreductase</keyword>
<keyword id="KW-0819">tRNA processing</keyword>
<evidence type="ECO:0000255" key="1">
    <source>
        <dbReference type="HAMAP-Rule" id="MF_00469"/>
    </source>
</evidence>
<evidence type="ECO:0000256" key="2">
    <source>
        <dbReference type="SAM" id="MobiDB-lite"/>
    </source>
</evidence>
<organism>
    <name type="scientific">Mesorhizobium japonicum (strain LMG 29417 / CECT 9101 / MAFF 303099)</name>
    <name type="common">Mesorhizobium loti (strain MAFF 303099)</name>
    <dbReference type="NCBI Taxonomy" id="266835"/>
    <lineage>
        <taxon>Bacteria</taxon>
        <taxon>Pseudomonadati</taxon>
        <taxon>Pseudomonadota</taxon>
        <taxon>Alphaproteobacteria</taxon>
        <taxon>Hyphomicrobiales</taxon>
        <taxon>Phyllobacteriaceae</taxon>
        <taxon>Mesorhizobium</taxon>
    </lineage>
</organism>
<accession>Q98H78</accession>
<dbReference type="EC" id="1.14.-.-" evidence="1"/>
<dbReference type="EMBL" id="BA000012">
    <property type="protein sequence ID" value="BAB49988.1"/>
    <property type="molecule type" value="Genomic_DNA"/>
</dbReference>
<dbReference type="RefSeq" id="WP_010911335.1">
    <property type="nucleotide sequence ID" value="NC_002678.2"/>
</dbReference>
<dbReference type="SMR" id="Q98H78"/>
<dbReference type="KEGG" id="mlo:mll2992"/>
<dbReference type="PATRIC" id="fig|266835.9.peg.2391"/>
<dbReference type="eggNOG" id="COG1054">
    <property type="taxonomic scope" value="Bacteria"/>
</dbReference>
<dbReference type="HOGENOM" id="CLU_038878_0_0_5"/>
<dbReference type="Proteomes" id="UP000000552">
    <property type="component" value="Chromosome"/>
</dbReference>
<dbReference type="GO" id="GO:0016705">
    <property type="term" value="F:oxidoreductase activity, acting on paired donors, with incorporation or reduction of molecular oxygen"/>
    <property type="evidence" value="ECO:0007669"/>
    <property type="project" value="UniProtKB-UniRule"/>
</dbReference>
<dbReference type="GO" id="GO:0006400">
    <property type="term" value="P:tRNA modification"/>
    <property type="evidence" value="ECO:0007669"/>
    <property type="project" value="UniProtKB-UniRule"/>
</dbReference>
<dbReference type="CDD" id="cd01518">
    <property type="entry name" value="RHOD_YceA"/>
    <property type="match status" value="1"/>
</dbReference>
<dbReference type="Gene3D" id="3.30.70.100">
    <property type="match status" value="1"/>
</dbReference>
<dbReference type="Gene3D" id="3.40.250.10">
    <property type="entry name" value="Rhodanese-like domain"/>
    <property type="match status" value="1"/>
</dbReference>
<dbReference type="HAMAP" id="MF_00469">
    <property type="entry name" value="TrhO"/>
    <property type="match status" value="1"/>
</dbReference>
<dbReference type="InterPro" id="IPR001763">
    <property type="entry name" value="Rhodanese-like_dom"/>
</dbReference>
<dbReference type="InterPro" id="IPR036873">
    <property type="entry name" value="Rhodanese-like_dom_sf"/>
</dbReference>
<dbReference type="InterPro" id="IPR020936">
    <property type="entry name" value="TrhO"/>
</dbReference>
<dbReference type="InterPro" id="IPR040503">
    <property type="entry name" value="TRHO_N"/>
</dbReference>
<dbReference type="NCBIfam" id="NF001136">
    <property type="entry name" value="PRK00142.1-4"/>
    <property type="match status" value="1"/>
</dbReference>
<dbReference type="PANTHER" id="PTHR43268:SF3">
    <property type="entry name" value="RHODANESE-LIKE DOMAIN-CONTAINING PROTEIN 7-RELATED"/>
    <property type="match status" value="1"/>
</dbReference>
<dbReference type="PANTHER" id="PTHR43268">
    <property type="entry name" value="THIOSULFATE SULFURTRANSFERASE/RHODANESE-LIKE DOMAIN-CONTAINING PROTEIN 2"/>
    <property type="match status" value="1"/>
</dbReference>
<dbReference type="Pfam" id="PF00581">
    <property type="entry name" value="Rhodanese"/>
    <property type="match status" value="1"/>
</dbReference>
<dbReference type="Pfam" id="PF17773">
    <property type="entry name" value="UPF0176_N"/>
    <property type="match status" value="1"/>
</dbReference>
<dbReference type="SMART" id="SM00450">
    <property type="entry name" value="RHOD"/>
    <property type="match status" value="1"/>
</dbReference>
<dbReference type="SUPFAM" id="SSF52821">
    <property type="entry name" value="Rhodanese/Cell cycle control phosphatase"/>
    <property type="match status" value="1"/>
</dbReference>
<dbReference type="PROSITE" id="PS50206">
    <property type="entry name" value="RHODANESE_3"/>
    <property type="match status" value="1"/>
</dbReference>
<protein>
    <recommendedName>
        <fullName evidence="1">tRNA uridine(34) hydroxylase</fullName>
        <ecNumber evidence="1">1.14.-.-</ecNumber>
    </recommendedName>
    <alternativeName>
        <fullName evidence="1">tRNA hydroxylation protein O</fullName>
    </alternativeName>
</protein>
<reference key="1">
    <citation type="journal article" date="2000" name="DNA Res.">
        <title>Complete genome structure of the nitrogen-fixing symbiotic bacterium Mesorhizobium loti.</title>
        <authorList>
            <person name="Kaneko T."/>
            <person name="Nakamura Y."/>
            <person name="Sato S."/>
            <person name="Asamizu E."/>
            <person name="Kato T."/>
            <person name="Sasamoto S."/>
            <person name="Watanabe A."/>
            <person name="Idesawa K."/>
            <person name="Ishikawa A."/>
            <person name="Kawashima K."/>
            <person name="Kimura T."/>
            <person name="Kishida Y."/>
            <person name="Kiyokawa C."/>
            <person name="Kohara M."/>
            <person name="Matsumoto M."/>
            <person name="Matsuno A."/>
            <person name="Mochizuki Y."/>
            <person name="Nakayama S."/>
            <person name="Nakazaki N."/>
            <person name="Shimpo S."/>
            <person name="Sugimoto M."/>
            <person name="Takeuchi C."/>
            <person name="Yamada M."/>
            <person name="Tabata S."/>
        </authorList>
    </citation>
    <scope>NUCLEOTIDE SEQUENCE [LARGE SCALE GENOMIC DNA]</scope>
    <source>
        <strain>LMG 29417 / CECT 9101 / MAFF 303099</strain>
    </source>
</reference>
<proteinExistence type="inferred from homology"/>
<comment type="function">
    <text evidence="1">Catalyzes oxygen-dependent 5-hydroxyuridine (ho5U) modification at position 34 in tRNAs.</text>
</comment>
<comment type="catalytic activity">
    <reaction evidence="1">
        <text>uridine(34) in tRNA + AH2 + O2 = 5-hydroxyuridine(34) in tRNA + A + H2O</text>
        <dbReference type="Rhea" id="RHEA:64224"/>
        <dbReference type="Rhea" id="RHEA-COMP:11727"/>
        <dbReference type="Rhea" id="RHEA-COMP:13381"/>
        <dbReference type="ChEBI" id="CHEBI:13193"/>
        <dbReference type="ChEBI" id="CHEBI:15377"/>
        <dbReference type="ChEBI" id="CHEBI:15379"/>
        <dbReference type="ChEBI" id="CHEBI:17499"/>
        <dbReference type="ChEBI" id="CHEBI:65315"/>
        <dbReference type="ChEBI" id="CHEBI:136877"/>
    </reaction>
</comment>
<comment type="similarity">
    <text evidence="1">Belongs to the TrhO family.</text>
</comment>